<accession>C5A082</accession>
<name>FIEF_ECOBW</name>
<feature type="chain" id="PRO_1000215264" description="Cation-efflux pump FieF">
    <location>
        <begin position="1"/>
        <end position="300"/>
    </location>
</feature>
<feature type="transmembrane region" description="Helical" evidence="1">
    <location>
        <begin position="12"/>
        <end position="32"/>
    </location>
</feature>
<feature type="transmembrane region" description="Helical" evidence="1">
    <location>
        <begin position="39"/>
        <end position="59"/>
    </location>
</feature>
<feature type="transmembrane region" description="Helical" evidence="1">
    <location>
        <begin position="82"/>
        <end position="102"/>
    </location>
</feature>
<feature type="transmembrane region" description="Helical" evidence="1">
    <location>
        <begin position="114"/>
        <end position="134"/>
    </location>
</feature>
<feature type="transmembrane region" description="Helical" evidence="1">
    <location>
        <begin position="156"/>
        <end position="176"/>
    </location>
</feature>
<feature type="transmembrane region" description="Helical" evidence="1">
    <location>
        <begin position="178"/>
        <end position="198"/>
    </location>
</feature>
<feature type="binding site" evidence="1">
    <location>
        <position position="45"/>
    </location>
    <ligand>
        <name>Zn(2+)</name>
        <dbReference type="ChEBI" id="CHEBI:29105"/>
    </ligand>
</feature>
<feature type="binding site" evidence="1">
    <location>
        <position position="49"/>
    </location>
    <ligand>
        <name>Zn(2+)</name>
        <dbReference type="ChEBI" id="CHEBI:29105"/>
    </ligand>
</feature>
<feature type="binding site" evidence="1">
    <location>
        <position position="153"/>
    </location>
    <ligand>
        <name>Zn(2+)</name>
        <dbReference type="ChEBI" id="CHEBI:29105"/>
    </ligand>
</feature>
<feature type="binding site" evidence="1">
    <location>
        <position position="157"/>
    </location>
    <ligand>
        <name>Zn(2+)</name>
        <dbReference type="ChEBI" id="CHEBI:29105"/>
    </ligand>
</feature>
<evidence type="ECO:0000255" key="1">
    <source>
        <dbReference type="HAMAP-Rule" id="MF_01425"/>
    </source>
</evidence>
<comment type="function">
    <text evidence="1">Divalent metal cation transporter which exports Zn(2+), Cd(2+) and possibly Fe(2+). May be involved in zinc and iron detoxification by efflux.</text>
</comment>
<comment type="catalytic activity">
    <reaction evidence="1">
        <text>Zn(2+)(in) + H(+)(out) = Zn(2+)(out) + H(+)(in)</text>
        <dbReference type="Rhea" id="RHEA:28839"/>
        <dbReference type="ChEBI" id="CHEBI:15378"/>
        <dbReference type="ChEBI" id="CHEBI:29105"/>
    </reaction>
</comment>
<comment type="catalytic activity">
    <reaction evidence="1">
        <text>Cd(2+)(in) + H(+)(out) = Cd(2+)(out) + H(+)(in)</text>
        <dbReference type="Rhea" id="RHEA:28739"/>
        <dbReference type="ChEBI" id="CHEBI:15378"/>
        <dbReference type="ChEBI" id="CHEBI:48775"/>
    </reaction>
</comment>
<comment type="catalytic activity">
    <reaction evidence="1">
        <text>Fe(2+)(in) + H(+)(out) = Fe(2+)(out) + H(+)(in)</text>
        <dbReference type="Rhea" id="RHEA:29439"/>
        <dbReference type="ChEBI" id="CHEBI:15378"/>
        <dbReference type="ChEBI" id="CHEBI:29033"/>
    </reaction>
</comment>
<comment type="subunit">
    <text evidence="1">Homodimer.</text>
</comment>
<comment type="subcellular location">
    <subcellularLocation>
        <location evidence="1">Cell inner membrane</location>
        <topology evidence="1">Multi-pass membrane protein</topology>
    </subcellularLocation>
</comment>
<comment type="similarity">
    <text evidence="1">Belongs to the cation diffusion facilitator (CDF) transporter (TC 2.A.4) family. FieF subfamily.</text>
</comment>
<protein>
    <recommendedName>
        <fullName evidence="1">Cation-efflux pump FieF</fullName>
    </recommendedName>
</protein>
<sequence length="300" mass="32927">MNQSYGRLVSRAAIAATAMASLLLLIKIFAWWYTGSVSILAALVDSLVDIGASLTNLLVVRYSLQPADDNHSFGHGKAESLAALAQSMFISGSALFLFLTGIQHLISPTPMTDPGVGVIVTIVALICTIILVSFQRWVVRRTQSQAVRADMLHYQSDVMMNGAILLALGLSWYGWHRADALFALGIGIYILYSALRMGYEAVQSLLDRALPDEERQEIIDIVTSWPGVSGAHDLRTRQSGPTRFIQIHLEMEDSLPLVQAHMVADQVEQAILRRFPGSDVIIHQDPCSVVPREGKRSMLS</sequence>
<dbReference type="EMBL" id="CP001396">
    <property type="protein sequence ID" value="ACR65792.1"/>
    <property type="molecule type" value="Genomic_DNA"/>
</dbReference>
<dbReference type="RefSeq" id="WP_001076742.1">
    <property type="nucleotide sequence ID" value="NC_012759.1"/>
</dbReference>
<dbReference type="SMR" id="C5A082"/>
<dbReference type="GeneID" id="75204588"/>
<dbReference type="KEGG" id="ebw:BWG_3584"/>
<dbReference type="HOGENOM" id="CLU_013430_3_0_6"/>
<dbReference type="GO" id="GO:0005886">
    <property type="term" value="C:plasma membrane"/>
    <property type="evidence" value="ECO:0007669"/>
    <property type="project" value="UniProtKB-SubCell"/>
</dbReference>
<dbReference type="GO" id="GO:0015086">
    <property type="term" value="F:cadmium ion transmembrane transporter activity"/>
    <property type="evidence" value="ECO:0007669"/>
    <property type="project" value="UniProtKB-UniRule"/>
</dbReference>
<dbReference type="GO" id="GO:0015093">
    <property type="term" value="F:ferrous iron transmembrane transporter activity"/>
    <property type="evidence" value="ECO:0007669"/>
    <property type="project" value="TreeGrafter"/>
</dbReference>
<dbReference type="GO" id="GO:0046872">
    <property type="term" value="F:metal ion binding"/>
    <property type="evidence" value="ECO:0007669"/>
    <property type="project" value="UniProtKB-KW"/>
</dbReference>
<dbReference type="GO" id="GO:0015341">
    <property type="term" value="F:zinc efflux antiporter activity"/>
    <property type="evidence" value="ECO:0007669"/>
    <property type="project" value="TreeGrafter"/>
</dbReference>
<dbReference type="GO" id="GO:0006882">
    <property type="term" value="P:intracellular zinc ion homeostasis"/>
    <property type="evidence" value="ECO:0007669"/>
    <property type="project" value="TreeGrafter"/>
</dbReference>
<dbReference type="FunFam" id="1.20.1510.10:FF:000001">
    <property type="entry name" value="Ferrous-iron efflux pump FieF"/>
    <property type="match status" value="1"/>
</dbReference>
<dbReference type="FunFam" id="3.30.70.1350:FF:000002">
    <property type="entry name" value="Ferrous-iron efflux pump FieF"/>
    <property type="match status" value="1"/>
</dbReference>
<dbReference type="Gene3D" id="1.20.1510.10">
    <property type="entry name" value="Cation efflux protein transmembrane domain"/>
    <property type="match status" value="1"/>
</dbReference>
<dbReference type="Gene3D" id="3.30.70.1350">
    <property type="entry name" value="Cation efflux protein, cytoplasmic domain"/>
    <property type="match status" value="1"/>
</dbReference>
<dbReference type="HAMAP" id="MF_01425">
    <property type="entry name" value="Cation_efflux_FieF"/>
    <property type="match status" value="1"/>
</dbReference>
<dbReference type="InterPro" id="IPR002524">
    <property type="entry name" value="Cation_efflux"/>
</dbReference>
<dbReference type="InterPro" id="IPR027470">
    <property type="entry name" value="Cation_efflux_CTD"/>
</dbReference>
<dbReference type="InterPro" id="IPR036837">
    <property type="entry name" value="Cation_efflux_CTD_sf"/>
</dbReference>
<dbReference type="InterPro" id="IPR023783">
    <property type="entry name" value="Cation_efflux_FieF"/>
</dbReference>
<dbReference type="InterPro" id="IPR027469">
    <property type="entry name" value="Cation_efflux_TMD_sf"/>
</dbReference>
<dbReference type="InterPro" id="IPR050291">
    <property type="entry name" value="CDF_Transporter"/>
</dbReference>
<dbReference type="NCBIfam" id="TIGR01297">
    <property type="entry name" value="CDF"/>
    <property type="match status" value="1"/>
</dbReference>
<dbReference type="NCBIfam" id="NF007064">
    <property type="entry name" value="PRK09509.1"/>
    <property type="match status" value="1"/>
</dbReference>
<dbReference type="PANTHER" id="PTHR43840:SF41">
    <property type="entry name" value="CATION-EFFLUX PUMP FIEF"/>
    <property type="match status" value="1"/>
</dbReference>
<dbReference type="PANTHER" id="PTHR43840">
    <property type="entry name" value="MITOCHONDRIAL METAL TRANSPORTER 1-RELATED"/>
    <property type="match status" value="1"/>
</dbReference>
<dbReference type="Pfam" id="PF01545">
    <property type="entry name" value="Cation_efflux"/>
    <property type="match status" value="1"/>
</dbReference>
<dbReference type="Pfam" id="PF16916">
    <property type="entry name" value="ZT_dimer"/>
    <property type="match status" value="1"/>
</dbReference>
<dbReference type="SUPFAM" id="SSF160240">
    <property type="entry name" value="Cation efflux protein cytoplasmic domain-like"/>
    <property type="match status" value="1"/>
</dbReference>
<dbReference type="SUPFAM" id="SSF161111">
    <property type="entry name" value="Cation efflux protein transmembrane domain-like"/>
    <property type="match status" value="1"/>
</dbReference>
<proteinExistence type="inferred from homology"/>
<organism>
    <name type="scientific">Escherichia coli (strain K12 / MC4100 / BW2952)</name>
    <dbReference type="NCBI Taxonomy" id="595496"/>
    <lineage>
        <taxon>Bacteria</taxon>
        <taxon>Pseudomonadati</taxon>
        <taxon>Pseudomonadota</taxon>
        <taxon>Gammaproteobacteria</taxon>
        <taxon>Enterobacterales</taxon>
        <taxon>Enterobacteriaceae</taxon>
        <taxon>Escherichia</taxon>
    </lineage>
</organism>
<keyword id="KW-0997">Cell inner membrane</keyword>
<keyword id="KW-1003">Cell membrane</keyword>
<keyword id="KW-0406">Ion transport</keyword>
<keyword id="KW-0408">Iron</keyword>
<keyword id="KW-0410">Iron transport</keyword>
<keyword id="KW-0472">Membrane</keyword>
<keyword id="KW-0479">Metal-binding</keyword>
<keyword id="KW-0812">Transmembrane</keyword>
<keyword id="KW-1133">Transmembrane helix</keyword>
<keyword id="KW-0813">Transport</keyword>
<keyword id="KW-0862">Zinc</keyword>
<keyword id="KW-0864">Zinc transport</keyword>
<reference key="1">
    <citation type="journal article" date="2009" name="J. Bacteriol.">
        <title>Genomic sequencing reveals regulatory mutations and recombinational events in the widely used MC4100 lineage of Escherichia coli K-12.</title>
        <authorList>
            <person name="Ferenci T."/>
            <person name="Zhou Z."/>
            <person name="Betteridge T."/>
            <person name="Ren Y."/>
            <person name="Liu Y."/>
            <person name="Feng L."/>
            <person name="Reeves P.R."/>
            <person name="Wang L."/>
        </authorList>
    </citation>
    <scope>NUCLEOTIDE SEQUENCE [LARGE SCALE GENOMIC DNA]</scope>
    <source>
        <strain>K12 / MC4100 / BW2952</strain>
    </source>
</reference>
<gene>
    <name evidence="1" type="primary">fieF</name>
    <name type="ordered locus">BWG_3584</name>
</gene>